<reference key="1">
    <citation type="journal article" date="1997" name="Science">
        <title>The complete genome sequence of Escherichia coli K-12.</title>
        <authorList>
            <person name="Blattner F.R."/>
            <person name="Plunkett G. III"/>
            <person name="Bloch C.A."/>
            <person name="Perna N.T."/>
            <person name="Burland V."/>
            <person name="Riley M."/>
            <person name="Collado-Vides J."/>
            <person name="Glasner J.D."/>
            <person name="Rode C.K."/>
            <person name="Mayhew G.F."/>
            <person name="Gregor J."/>
            <person name="Davis N.W."/>
            <person name="Kirkpatrick H.A."/>
            <person name="Goeden M.A."/>
            <person name="Rose D.J."/>
            <person name="Mau B."/>
            <person name="Shao Y."/>
        </authorList>
    </citation>
    <scope>NUCLEOTIDE SEQUENCE [LARGE SCALE GENOMIC DNA]</scope>
    <source>
        <strain>K12 / MG1655 / ATCC 47076</strain>
    </source>
</reference>
<reference key="2">
    <citation type="journal article" date="2006" name="Mol. Syst. Biol.">
        <title>Highly accurate genome sequences of Escherichia coli K-12 strains MG1655 and W3110.</title>
        <authorList>
            <person name="Hayashi K."/>
            <person name="Morooka N."/>
            <person name="Yamamoto Y."/>
            <person name="Fujita K."/>
            <person name="Isono K."/>
            <person name="Choi S."/>
            <person name="Ohtsubo E."/>
            <person name="Baba T."/>
            <person name="Wanner B.L."/>
            <person name="Mori H."/>
            <person name="Horiuchi T."/>
        </authorList>
    </citation>
    <scope>NUCLEOTIDE SEQUENCE [LARGE SCALE GENOMIC DNA]</scope>
    <source>
        <strain>K12 / W3110 / ATCC 27325 / DSM 5911</strain>
    </source>
</reference>
<reference key="3">
    <citation type="journal article" date="1993" name="J. Bacteriol.">
        <title>Amplification of the bacA gene confers bacitracin resistance to Escherichia coli.</title>
        <authorList>
            <person name="Cain B.D."/>
            <person name="Norton P.J."/>
            <person name="Eubanks W."/>
            <person name="Nick H.S."/>
            <person name="Allen C.M."/>
        </authorList>
    </citation>
    <scope>NUCLEOTIDE SEQUENCE [GENOMIC DNA] OF 1-157</scope>
    <scope>RESISTANCE TO BACITRACIN</scope>
    <source>
        <strain>K12 / ATCC 35607 / JM83</strain>
    </source>
</reference>
<reference key="4">
    <citation type="journal article" date="1986" name="J. Biol. Chem.">
        <title>Cloning, sequencing, and species relatedness of the Escherichia coli cca gene encoding the enzyme tRNA nucleotidyltransferase.</title>
        <authorList>
            <person name="Cudny H."/>
            <person name="Lupski J.R."/>
            <person name="Godson G.N."/>
            <person name="Deutscher M.P."/>
        </authorList>
    </citation>
    <scope>NUCLEOTIDE SEQUENCE [GENOMIC DNA] OF 146-273</scope>
</reference>
<reference key="5">
    <citation type="unpublished observations" date="1994-11">
        <authorList>
            <person name="Rudd K.E."/>
        </authorList>
    </citation>
    <scope>PRELIMINARY CONCEPTUAL TRANSLATION</scope>
</reference>
<reference key="6">
    <citation type="journal article" date="2004" name="J. Biol. Chem.">
        <title>The bacA gene of Escherichia coli encodes an undecaprenyl pyrophosphate phosphatase activity.</title>
        <authorList>
            <person name="El Ghachi M."/>
            <person name="Bouhss A."/>
            <person name="Blanot D."/>
            <person name="Mengin-Lecreulx D."/>
        </authorList>
    </citation>
    <scope>CATALYTIC ACTIVITY</scope>
    <scope>SUBCELLULAR LOCATION</scope>
</reference>
<reference key="7">
    <citation type="journal article" date="2005" name="J. Biol. Chem.">
        <title>Identification of multiple genes encoding membrane proteins with undecaprenyl pyrophosphate phosphatase (UppP) activity in Escherichia coli.</title>
        <authorList>
            <person name="El Ghachi M."/>
            <person name="Derbise A."/>
            <person name="Bouhss A."/>
            <person name="Mengin-Lecreulx D."/>
        </authorList>
    </citation>
    <scope>FUNCTION</scope>
</reference>
<reference key="8">
    <citation type="journal article" date="2005" name="Science">
        <title>Global topology analysis of the Escherichia coli inner membrane proteome.</title>
        <authorList>
            <person name="Daley D.O."/>
            <person name="Rapp M."/>
            <person name="Granseth E."/>
            <person name="Melen K."/>
            <person name="Drew D."/>
            <person name="von Heijne G."/>
        </authorList>
    </citation>
    <scope>SUBCELLULAR LOCATION</scope>
    <source>
        <strain>K12 / MG1655 / ATCC 47076</strain>
    </source>
</reference>
<evidence type="ECO:0000255" key="1"/>
<evidence type="ECO:0000269" key="2">
    <source>
    </source>
</evidence>
<evidence type="ECO:0000269" key="3">
    <source>
    </source>
</evidence>
<evidence type="ECO:0000269" key="4">
    <source>
    </source>
</evidence>
<evidence type="ECO:0000305" key="5"/>
<evidence type="ECO:0000305" key="6">
    <source>
    </source>
</evidence>
<evidence type="ECO:0007829" key="7">
    <source>
        <dbReference type="PDB" id="6FMV"/>
    </source>
</evidence>
<accession>P60932</accession>
<accession>P31054</accession>
<accession>P39203</accession>
<accession>Q2M9E8</accession>
<name>UPPP_ECOLI</name>
<feature type="chain" id="PRO_0000151146" description="Undecaprenyl-diphosphatase">
    <location>
        <begin position="1"/>
        <end position="273"/>
    </location>
</feature>
<feature type="transmembrane region" description="Helical" evidence="1">
    <location>
        <begin position="6"/>
        <end position="26"/>
    </location>
</feature>
<feature type="transmembrane region" description="Helical" evidence="1">
    <location>
        <begin position="45"/>
        <end position="65"/>
    </location>
</feature>
<feature type="transmembrane region" description="Helical" evidence="1">
    <location>
        <begin position="90"/>
        <end position="110"/>
    </location>
</feature>
<feature type="transmembrane region" description="Helical" evidence="1">
    <location>
        <begin position="116"/>
        <end position="136"/>
    </location>
</feature>
<feature type="transmembrane region" description="Helical" evidence="1">
    <location>
        <begin position="190"/>
        <end position="210"/>
    </location>
</feature>
<feature type="transmembrane region" description="Helical" evidence="1">
    <location>
        <begin position="222"/>
        <end position="242"/>
    </location>
</feature>
<feature type="transmembrane region" description="Helical" evidence="1">
    <location>
        <begin position="252"/>
        <end position="272"/>
    </location>
</feature>
<feature type="sequence conflict" description="In Ref. 4." evidence="5" ref="4">
    <original>F</original>
    <variation>I</variation>
    <location>
        <position position="158"/>
    </location>
</feature>
<feature type="helix" evidence="7">
    <location>
        <begin position="5"/>
        <end position="20"/>
    </location>
</feature>
<feature type="turn" evidence="7">
    <location>
        <begin position="21"/>
        <end position="24"/>
    </location>
</feature>
<feature type="helix" evidence="7">
    <location>
        <begin position="27"/>
        <end position="37"/>
    </location>
</feature>
<feature type="helix" evidence="7">
    <location>
        <begin position="43"/>
        <end position="63"/>
    </location>
</feature>
<feature type="helix" evidence="7">
    <location>
        <begin position="65"/>
        <end position="71"/>
    </location>
</feature>
<feature type="strand" evidence="7">
    <location>
        <begin position="84"/>
        <end position="87"/>
    </location>
</feature>
<feature type="helix" evidence="7">
    <location>
        <begin position="92"/>
        <end position="115"/>
    </location>
</feature>
<feature type="helix" evidence="7">
    <location>
        <begin position="119"/>
        <end position="139"/>
    </location>
</feature>
<feature type="strand" evidence="7">
    <location>
        <begin position="145"/>
        <end position="148"/>
    </location>
</feature>
<feature type="helix" evidence="7">
    <location>
        <begin position="149"/>
        <end position="151"/>
    </location>
</feature>
<feature type="helix" evidence="7">
    <location>
        <begin position="154"/>
        <end position="164"/>
    </location>
</feature>
<feature type="helix" evidence="7">
    <location>
        <begin position="165"/>
        <end position="168"/>
    </location>
</feature>
<feature type="helix" evidence="7">
    <location>
        <begin position="174"/>
        <end position="184"/>
    </location>
</feature>
<feature type="helix" evidence="7">
    <location>
        <begin position="189"/>
        <end position="214"/>
    </location>
</feature>
<feature type="turn" evidence="7">
    <location>
        <begin position="215"/>
        <end position="218"/>
    </location>
</feature>
<feature type="helix" evidence="7">
    <location>
        <begin position="221"/>
        <end position="223"/>
    </location>
</feature>
<feature type="helix" evidence="7">
    <location>
        <begin position="224"/>
        <end position="248"/>
    </location>
</feature>
<feature type="turn" evidence="7">
    <location>
        <begin position="249"/>
        <end position="251"/>
    </location>
</feature>
<feature type="helix" evidence="7">
    <location>
        <begin position="255"/>
        <end position="272"/>
    </location>
</feature>
<comment type="function">
    <text evidence="3">Catalyzes the dephosphorylation of undecaprenyl diphosphate (UPP). Confers resistance to bacitracin.</text>
</comment>
<comment type="catalytic activity">
    <reaction evidence="2">
        <text>di-trans,octa-cis-undecaprenyl diphosphate + H2O = di-trans,octa-cis-undecaprenyl phosphate + phosphate + H(+)</text>
        <dbReference type="Rhea" id="RHEA:28094"/>
        <dbReference type="ChEBI" id="CHEBI:15377"/>
        <dbReference type="ChEBI" id="CHEBI:15378"/>
        <dbReference type="ChEBI" id="CHEBI:43474"/>
        <dbReference type="ChEBI" id="CHEBI:58405"/>
        <dbReference type="ChEBI" id="CHEBI:60392"/>
        <dbReference type="EC" id="3.6.1.27"/>
    </reaction>
</comment>
<comment type="subcellular location">
    <subcellularLocation>
        <location evidence="2 4">Cell inner membrane</location>
        <topology evidence="2 4">Multi-pass membrane protein</topology>
    </subcellularLocation>
</comment>
<comment type="miscellaneous">
    <text>Bacitracin is thought to be involved in the inhibition of peptidoglycan synthesis by sequestering undecaprenyl diphosphate, thereby reducing the pool of lipid carrier available.</text>
</comment>
<comment type="similarity">
    <text evidence="5">Belongs to the UppP family.</text>
</comment>
<comment type="caution">
    <text evidence="6">Was originally thought to be an undecaprenol kinase.</text>
</comment>
<comment type="sequence caution" evidence="5">
    <conflict type="frameshift">
        <sequence resource="EMBL" id="L12966"/>
    </conflict>
</comment>
<comment type="sequence caution" evidence="5">
    <conflict type="frameshift">
        <sequence resource="EMBL" id="M12788"/>
    </conflict>
</comment>
<dbReference type="EC" id="3.6.1.27"/>
<dbReference type="EMBL" id="U28379">
    <property type="protein sequence ID" value="AAA89137.1"/>
    <property type="molecule type" value="Genomic_DNA"/>
</dbReference>
<dbReference type="EMBL" id="U00096">
    <property type="protein sequence ID" value="AAC76093.1"/>
    <property type="molecule type" value="Genomic_DNA"/>
</dbReference>
<dbReference type="EMBL" id="AP009048">
    <property type="protein sequence ID" value="BAE77108.1"/>
    <property type="molecule type" value="Genomic_DNA"/>
</dbReference>
<dbReference type="EMBL" id="L12966">
    <property type="status" value="NOT_ANNOTATED_CDS"/>
    <property type="molecule type" value="Genomic_DNA"/>
</dbReference>
<dbReference type="EMBL" id="M12788">
    <property type="status" value="NOT_ANNOTATED_CDS"/>
    <property type="molecule type" value="Genomic_DNA"/>
</dbReference>
<dbReference type="PIR" id="G65093">
    <property type="entry name" value="G65093"/>
</dbReference>
<dbReference type="RefSeq" id="NP_417529.1">
    <property type="nucleotide sequence ID" value="NC_000913.3"/>
</dbReference>
<dbReference type="RefSeq" id="WP_001281927.1">
    <property type="nucleotide sequence ID" value="NZ_LN832404.1"/>
</dbReference>
<dbReference type="PDB" id="5OON">
    <property type="method" value="X-ray"/>
    <property type="resolution" value="2.60 A"/>
    <property type="chains" value="A=1-273"/>
</dbReference>
<dbReference type="PDB" id="6CB2">
    <property type="method" value="X-ray"/>
    <property type="resolution" value="2.00 A"/>
    <property type="chains" value="A=1-273"/>
</dbReference>
<dbReference type="PDB" id="6FMT">
    <property type="method" value="X-ray"/>
    <property type="resolution" value="3.00 A"/>
    <property type="chains" value="A=1-273"/>
</dbReference>
<dbReference type="PDB" id="6FMV">
    <property type="method" value="X-ray"/>
    <property type="resolution" value="2.30 A"/>
    <property type="chains" value="A=1-273"/>
</dbReference>
<dbReference type="PDB" id="6FMW">
    <property type="method" value="X-ray"/>
    <property type="resolution" value="2.60 A"/>
    <property type="chains" value="A=1-273"/>
</dbReference>
<dbReference type="PDBsum" id="5OON"/>
<dbReference type="PDBsum" id="6CB2"/>
<dbReference type="PDBsum" id="6FMT"/>
<dbReference type="PDBsum" id="6FMV"/>
<dbReference type="PDBsum" id="6FMW"/>
<dbReference type="SMR" id="P60932"/>
<dbReference type="BioGRID" id="4261190">
    <property type="interactions" value="288"/>
</dbReference>
<dbReference type="DIP" id="DIP-48044N"/>
<dbReference type="FunCoup" id="P60932">
    <property type="interactions" value="469"/>
</dbReference>
<dbReference type="IntAct" id="P60932">
    <property type="interactions" value="1"/>
</dbReference>
<dbReference type="STRING" id="511145.b3057"/>
<dbReference type="BindingDB" id="P60932"/>
<dbReference type="ChEMBL" id="CHEMBL4295581"/>
<dbReference type="DrugCentral" id="P60932"/>
<dbReference type="SwissLipids" id="SLP:000001810"/>
<dbReference type="CARD" id="ARO:3002986">
    <property type="molecule name" value="bacA"/>
    <property type="mechanism identifier" value="ARO:0001001"/>
    <property type="mechanism name" value="antibiotic target alteration"/>
</dbReference>
<dbReference type="jPOST" id="P60932"/>
<dbReference type="PaxDb" id="511145-b3057"/>
<dbReference type="EnsemblBacteria" id="AAC76093">
    <property type="protein sequence ID" value="AAC76093"/>
    <property type="gene ID" value="b3057"/>
</dbReference>
<dbReference type="GeneID" id="947551"/>
<dbReference type="KEGG" id="ecj:JW3029"/>
<dbReference type="KEGG" id="eco:b3057"/>
<dbReference type="KEGG" id="ecoc:C3026_16705"/>
<dbReference type="PATRIC" id="fig|1411691.4.peg.3674"/>
<dbReference type="EchoBASE" id="EB1616"/>
<dbReference type="eggNOG" id="COG1968">
    <property type="taxonomic scope" value="Bacteria"/>
</dbReference>
<dbReference type="HOGENOM" id="CLU_060296_2_0_6"/>
<dbReference type="InParanoid" id="P60932"/>
<dbReference type="OMA" id="AWYRIVF"/>
<dbReference type="OrthoDB" id="9808289at2"/>
<dbReference type="PhylomeDB" id="P60932"/>
<dbReference type="BioCyc" id="EcoCyc:EG11665-MONOMER"/>
<dbReference type="BioCyc" id="MetaCyc:EG11665-MONOMER"/>
<dbReference type="BRENDA" id="3.6.1.27">
    <property type="organism ID" value="2026"/>
</dbReference>
<dbReference type="PRO" id="PR:P60932"/>
<dbReference type="Proteomes" id="UP000000625">
    <property type="component" value="Chromosome"/>
</dbReference>
<dbReference type="GO" id="GO:0005886">
    <property type="term" value="C:plasma membrane"/>
    <property type="evidence" value="ECO:0000314"/>
    <property type="project" value="EcoCyc"/>
</dbReference>
<dbReference type="GO" id="GO:0016462">
    <property type="term" value="F:pyrophosphatase activity"/>
    <property type="evidence" value="ECO:0000314"/>
    <property type="project" value="EcoCyc"/>
</dbReference>
<dbReference type="GO" id="GO:0050380">
    <property type="term" value="F:undecaprenyl-diphosphatase activity"/>
    <property type="evidence" value="ECO:0000314"/>
    <property type="project" value="EcoliWiki"/>
</dbReference>
<dbReference type="GO" id="GO:0071555">
    <property type="term" value="P:cell wall organization"/>
    <property type="evidence" value="ECO:0007669"/>
    <property type="project" value="UniProtKB-KW"/>
</dbReference>
<dbReference type="GO" id="GO:0009252">
    <property type="term" value="P:peptidoglycan biosynthetic process"/>
    <property type="evidence" value="ECO:0007669"/>
    <property type="project" value="UniProtKB-KW"/>
</dbReference>
<dbReference type="GO" id="GO:0000270">
    <property type="term" value="P:peptidoglycan metabolic process"/>
    <property type="evidence" value="ECO:0000269"/>
    <property type="project" value="EcoCyc"/>
</dbReference>
<dbReference type="GO" id="GO:0008360">
    <property type="term" value="P:regulation of cell shape"/>
    <property type="evidence" value="ECO:0007669"/>
    <property type="project" value="UniProtKB-KW"/>
</dbReference>
<dbReference type="GO" id="GO:0046677">
    <property type="term" value="P:response to antibiotic"/>
    <property type="evidence" value="ECO:0000314"/>
    <property type="project" value="EcoCyc"/>
</dbReference>
<dbReference type="HAMAP" id="MF_01006">
    <property type="entry name" value="Undec_diphosphatase"/>
    <property type="match status" value="1"/>
</dbReference>
<dbReference type="InterPro" id="IPR003824">
    <property type="entry name" value="UppP"/>
</dbReference>
<dbReference type="NCBIfam" id="NF001388">
    <property type="entry name" value="PRK00281.1-1"/>
    <property type="match status" value="1"/>
</dbReference>
<dbReference type="NCBIfam" id="NF001389">
    <property type="entry name" value="PRK00281.1-2"/>
    <property type="match status" value="1"/>
</dbReference>
<dbReference type="NCBIfam" id="NF001390">
    <property type="entry name" value="PRK00281.1-4"/>
    <property type="match status" value="1"/>
</dbReference>
<dbReference type="NCBIfam" id="TIGR00753">
    <property type="entry name" value="undec_PP_bacA"/>
    <property type="match status" value="1"/>
</dbReference>
<dbReference type="PANTHER" id="PTHR30622">
    <property type="entry name" value="UNDECAPRENYL-DIPHOSPHATASE"/>
    <property type="match status" value="1"/>
</dbReference>
<dbReference type="PANTHER" id="PTHR30622:SF3">
    <property type="entry name" value="UNDECAPRENYL-DIPHOSPHATASE"/>
    <property type="match status" value="1"/>
</dbReference>
<dbReference type="Pfam" id="PF02673">
    <property type="entry name" value="BacA"/>
    <property type="match status" value="1"/>
</dbReference>
<keyword id="KW-0002">3D-structure</keyword>
<keyword id="KW-0046">Antibiotic resistance</keyword>
<keyword id="KW-0997">Cell inner membrane</keyword>
<keyword id="KW-1003">Cell membrane</keyword>
<keyword id="KW-0133">Cell shape</keyword>
<keyword id="KW-0961">Cell wall biogenesis/degradation</keyword>
<keyword id="KW-0378">Hydrolase</keyword>
<keyword id="KW-0472">Membrane</keyword>
<keyword id="KW-0573">Peptidoglycan synthesis</keyword>
<keyword id="KW-1185">Reference proteome</keyword>
<keyword id="KW-0812">Transmembrane</keyword>
<keyword id="KW-1133">Transmembrane helix</keyword>
<gene>
    <name type="primary">uppP</name>
    <name type="synonym">bacA</name>
    <name type="synonym">upk</name>
    <name type="ordered locus">b3057</name>
    <name type="ordered locus">JW3029</name>
</gene>
<protein>
    <recommendedName>
        <fullName>Undecaprenyl-diphosphatase</fullName>
        <ecNumber>3.6.1.27</ecNumber>
    </recommendedName>
    <alternativeName>
        <fullName>Bacitracin resistance protein</fullName>
    </alternativeName>
    <alternativeName>
        <fullName>Undecaprenyl pyrophosphate phosphatase</fullName>
    </alternativeName>
</protein>
<proteinExistence type="evidence at protein level"/>
<sequence length="273" mass="29759">MSDMHSLLIAAILGVVEGLTEFLPVSSTGHMIIVGHLLGFEGDTAKTFEVVIQLGSILAVVVMFWRRLFGLIGIHFGRPLQHEGESKGRLTLIHILLGMIPAVVLGLLFHDTIKSLFNPINVMYALVVGGLLLIAAECLKPKEPRAPGLDDMTYRQAFMIGCFQCLALWPGFSRSGATISGGMLMGVSRYAASEFSFLLAVPMMMGATALDLYKSWGFLTSGDIPMFAVGFITAFVVALIAIKTFLQLIKRISFIPFAIYRFIVAAAVYVVFF</sequence>
<organism>
    <name type="scientific">Escherichia coli (strain K12)</name>
    <dbReference type="NCBI Taxonomy" id="83333"/>
    <lineage>
        <taxon>Bacteria</taxon>
        <taxon>Pseudomonadati</taxon>
        <taxon>Pseudomonadota</taxon>
        <taxon>Gammaproteobacteria</taxon>
        <taxon>Enterobacterales</taxon>
        <taxon>Enterobacteriaceae</taxon>
        <taxon>Escherichia</taxon>
    </lineage>
</organism>